<gene>
    <name evidence="1" type="primary">P</name>
</gene>
<dbReference type="EC" id="2.7.7.7" evidence="1"/>
<dbReference type="EC" id="2.7.7.49" evidence="1"/>
<dbReference type="EC" id="3.1.26.4" evidence="1"/>
<dbReference type="EMBL" id="AY090460">
    <property type="protein sequence ID" value="AAM09065.1"/>
    <property type="molecule type" value="Genomic_DNA"/>
</dbReference>
<dbReference type="Proteomes" id="UP000001181">
    <property type="component" value="Segment"/>
</dbReference>
<dbReference type="GO" id="GO:0003677">
    <property type="term" value="F:DNA binding"/>
    <property type="evidence" value="ECO:0007669"/>
    <property type="project" value="UniProtKB-UniRule"/>
</dbReference>
<dbReference type="GO" id="GO:0003887">
    <property type="term" value="F:DNA-directed DNA polymerase activity"/>
    <property type="evidence" value="ECO:0007669"/>
    <property type="project" value="UniProtKB-UniRule"/>
</dbReference>
<dbReference type="GO" id="GO:0046872">
    <property type="term" value="F:metal ion binding"/>
    <property type="evidence" value="ECO:0007669"/>
    <property type="project" value="UniProtKB-UniRule"/>
</dbReference>
<dbReference type="GO" id="GO:0003964">
    <property type="term" value="F:RNA-directed DNA polymerase activity"/>
    <property type="evidence" value="ECO:0007669"/>
    <property type="project" value="UniProtKB-UniRule"/>
</dbReference>
<dbReference type="GO" id="GO:0004523">
    <property type="term" value="F:RNA-DNA hybrid ribonuclease activity"/>
    <property type="evidence" value="ECO:0007669"/>
    <property type="project" value="UniProtKB-UniRule"/>
</dbReference>
<dbReference type="GO" id="GO:0006260">
    <property type="term" value="P:DNA replication"/>
    <property type="evidence" value="ECO:0007669"/>
    <property type="project" value="UniProtKB-UniRule"/>
</dbReference>
<dbReference type="GO" id="GO:0052170">
    <property type="term" value="P:symbiont-mediated suppression of host innate immune response"/>
    <property type="evidence" value="ECO:0007669"/>
    <property type="project" value="UniProtKB-UniRule"/>
</dbReference>
<dbReference type="FunFam" id="3.30.70.270:FF:000009">
    <property type="entry name" value="Protein P"/>
    <property type="match status" value="1"/>
</dbReference>
<dbReference type="Gene3D" id="3.30.70.270">
    <property type="match status" value="1"/>
</dbReference>
<dbReference type="HAMAP" id="MF_04073">
    <property type="entry name" value="HBV_DPOL"/>
    <property type="match status" value="1"/>
</dbReference>
<dbReference type="InterPro" id="IPR043502">
    <property type="entry name" value="DNA/RNA_pol_sf"/>
</dbReference>
<dbReference type="InterPro" id="IPR001462">
    <property type="entry name" value="DNApol_viral_C"/>
</dbReference>
<dbReference type="InterPro" id="IPR000201">
    <property type="entry name" value="DNApol_viral_N"/>
</dbReference>
<dbReference type="InterPro" id="IPR037531">
    <property type="entry name" value="HBV_DPOL"/>
</dbReference>
<dbReference type="InterPro" id="IPR043128">
    <property type="entry name" value="Rev_trsase/Diguanyl_cyclase"/>
</dbReference>
<dbReference type="InterPro" id="IPR000477">
    <property type="entry name" value="RT_dom"/>
</dbReference>
<dbReference type="InterPro" id="IPR051320">
    <property type="entry name" value="Viral_Replic_Matur_Polypro"/>
</dbReference>
<dbReference type="PANTHER" id="PTHR33064:SF29">
    <property type="entry name" value="PEPTIDASE A2 DOMAIN-CONTAINING PROTEIN-RELATED"/>
    <property type="match status" value="1"/>
</dbReference>
<dbReference type="PANTHER" id="PTHR33064">
    <property type="entry name" value="POL PROTEIN"/>
    <property type="match status" value="1"/>
</dbReference>
<dbReference type="Pfam" id="PF00336">
    <property type="entry name" value="DNA_pol_viral_C"/>
    <property type="match status" value="1"/>
</dbReference>
<dbReference type="Pfam" id="PF00242">
    <property type="entry name" value="DNA_pol_viral_N"/>
    <property type="match status" value="1"/>
</dbReference>
<dbReference type="Pfam" id="PF00078">
    <property type="entry name" value="RVT_1"/>
    <property type="match status" value="1"/>
</dbReference>
<dbReference type="SUPFAM" id="SSF56672">
    <property type="entry name" value="DNA/RNA polymerases"/>
    <property type="match status" value="1"/>
</dbReference>
<dbReference type="PROSITE" id="PS50878">
    <property type="entry name" value="RT_POL"/>
    <property type="match status" value="1"/>
</dbReference>
<keyword id="KW-0235">DNA replication</keyword>
<keyword id="KW-0238">DNA-binding</keyword>
<keyword id="KW-0239">DNA-directed DNA polymerase</keyword>
<keyword id="KW-0255">Endonuclease</keyword>
<keyword id="KW-0945">Host-virus interaction</keyword>
<keyword id="KW-0378">Hydrolase</keyword>
<keyword id="KW-1090">Inhibition of host innate immune response by virus</keyword>
<keyword id="KW-1113">Inhibition of host RLR pathway by virus</keyword>
<keyword id="KW-0460">Magnesium</keyword>
<keyword id="KW-0479">Metal-binding</keyword>
<keyword id="KW-0511">Multifunctional enzyme</keyword>
<keyword id="KW-0540">Nuclease</keyword>
<keyword id="KW-0548">Nucleotidyltransferase</keyword>
<keyword id="KW-0695">RNA-directed DNA polymerase</keyword>
<keyword id="KW-0808">Transferase</keyword>
<keyword id="KW-0899">Viral immunoevasion</keyword>
<evidence type="ECO:0000255" key="1">
    <source>
        <dbReference type="HAMAP-Rule" id="MF_04073"/>
    </source>
</evidence>
<evidence type="ECO:0000256" key="2">
    <source>
        <dbReference type="SAM" id="MobiDB-lite"/>
    </source>
</evidence>
<organism>
    <name type="scientific">Hepatitis B virus genotype H (isolate United States/LAS2523/2002)</name>
    <name type="common">HBV-H</name>
    <dbReference type="NCBI Taxonomy" id="489539"/>
    <lineage>
        <taxon>Viruses</taxon>
        <taxon>Riboviria</taxon>
        <taxon>Pararnavirae</taxon>
        <taxon>Artverviricota</taxon>
        <taxon>Revtraviricetes</taxon>
        <taxon>Blubervirales</taxon>
        <taxon>Hepadnaviridae</taxon>
        <taxon>Orthohepadnavirus</taxon>
        <taxon>Hepatitis B virus</taxon>
        <taxon>hepatitis B virus genotype H</taxon>
    </lineage>
</organism>
<protein>
    <recommendedName>
        <fullName evidence="1">Protein P</fullName>
    </recommendedName>
    <domain>
        <recommendedName>
            <fullName evidence="1">DNA-directed DNA polymerase</fullName>
            <ecNumber evidence="1">2.7.7.7</ecNumber>
        </recommendedName>
    </domain>
    <domain>
        <recommendedName>
            <fullName evidence="1">RNA-directed DNA polymerase</fullName>
            <ecNumber evidence="1">2.7.7.49</ecNumber>
        </recommendedName>
    </domain>
    <domain>
        <recommendedName>
            <fullName evidence="1">Ribonuclease H</fullName>
            <ecNumber evidence="1">3.1.26.4</ecNumber>
        </recommendedName>
    </domain>
</protein>
<organismHost>
    <name type="scientific">Homo sapiens</name>
    <name type="common">Human</name>
    <dbReference type="NCBI Taxonomy" id="9606"/>
</organismHost>
<organismHost>
    <name type="scientific">Pan troglodytes</name>
    <name type="common">Chimpanzee</name>
    <dbReference type="NCBI Taxonomy" id="9598"/>
</organismHost>
<proteinExistence type="inferred from homology"/>
<reference key="1">
    <citation type="journal article" date="2002" name="J. Gen. Virol.">
        <title>Genotype H: a new Amerindian genotype of hepatitis B virus revealed in Central America.</title>
        <authorList>
            <person name="Arauz-Ruiz P."/>
            <person name="Norder H."/>
            <person name="Robertson B.H."/>
            <person name="Magnius L.O."/>
        </authorList>
    </citation>
    <scope>NUCLEOTIDE SEQUENCE [GENOMIC DNA]</scope>
</reference>
<reference key="2">
    <citation type="journal article" date="2007" name="World J. Gastroenterol.">
        <title>Hepatitis B virus replication.</title>
        <authorList>
            <person name="Beck J."/>
            <person name="Nassal M."/>
        </authorList>
    </citation>
    <scope>REVIEW</scope>
</reference>
<accession>Q8JMY7</accession>
<feature type="chain" id="PRO_0000323280" description="Protein P">
    <location>
        <begin position="1"/>
        <end position="843"/>
    </location>
</feature>
<feature type="domain" description="Reverse transcriptase" evidence="1">
    <location>
        <begin position="357"/>
        <end position="600"/>
    </location>
</feature>
<feature type="region of interest" description="Terminal protein domain (TP)" evidence="1">
    <location>
        <begin position="1"/>
        <end position="177"/>
    </location>
</feature>
<feature type="region of interest" description="Spacer" evidence="1">
    <location>
        <begin position="178"/>
        <end position="346"/>
    </location>
</feature>
<feature type="region of interest" description="Disordered" evidence="2">
    <location>
        <begin position="180"/>
        <end position="202"/>
    </location>
</feature>
<feature type="region of interest" description="Disordered" evidence="2">
    <location>
        <begin position="226"/>
        <end position="315"/>
    </location>
</feature>
<feature type="region of interest" description="Polymerase/reverse transcriptase domain (RT)" evidence="1">
    <location>
        <begin position="347"/>
        <end position="690"/>
    </location>
</feature>
<feature type="compositionally biased region" description="Basic residues" evidence="2">
    <location>
        <begin position="239"/>
        <end position="249"/>
    </location>
</feature>
<feature type="compositionally biased region" description="Polar residues" evidence="2">
    <location>
        <begin position="262"/>
        <end position="277"/>
    </location>
</feature>
<feature type="compositionally biased region" description="Polar residues" evidence="2">
    <location>
        <begin position="287"/>
        <end position="299"/>
    </location>
</feature>
<feature type="binding site" evidence="1">
    <location>
        <position position="429"/>
    </location>
    <ligand>
        <name>Mg(2+)</name>
        <dbReference type="ChEBI" id="CHEBI:18420"/>
        <note>catalytic</note>
    </ligand>
</feature>
<feature type="binding site" evidence="1">
    <location>
        <position position="551"/>
    </location>
    <ligand>
        <name>Mg(2+)</name>
        <dbReference type="ChEBI" id="CHEBI:18420"/>
        <note>catalytic</note>
    </ligand>
</feature>
<feature type="binding site" evidence="1">
    <location>
        <position position="552"/>
    </location>
    <ligand>
        <name>Mg(2+)</name>
        <dbReference type="ChEBI" id="CHEBI:18420"/>
        <note>catalytic</note>
    </ligand>
</feature>
<feature type="site" description="Priming of reverse-transcription by covalently linking the first nucleotide of the (-)DNA" evidence="1">
    <location>
        <position position="63"/>
    </location>
</feature>
<name>DPOL_HBVH1</name>
<comment type="function">
    <text evidence="1">Multifunctional enzyme that converts the viral RNA genome into dsDNA in viral cytoplasmic capsids. This enzyme displays a DNA polymerase activity that can copy either DNA or RNA templates, and a ribonuclease H (RNase H) activity that cleaves the RNA strand of RNA-DNA heteroduplexes in a partially processive 3'- to 5'-endonucleasic mode. Neo-synthesized pregenomic RNA (pgRNA) are encapsidated together with the P protein, and reverse-transcribed inside the nucleocapsid. Initiation of reverse-transcription occurs first by binding the epsilon loop on the pgRNA genome, and is initiated by protein priming, thereby the 5'-end of (-)DNA is covalently linked to P protein. Partial (+)DNA is synthesized from the (-)DNA template and generates the relaxed circular DNA (RC-DNA) genome. After budding and infection, the RC-DNA migrates in the nucleus, and is converted into a plasmid-like covalently closed circular DNA (cccDNA). The activity of P protein does not seem to be necessary for cccDNA generation, and is presumably released from (+)DNA by host nuclear DNA repair machinery.</text>
</comment>
<comment type="catalytic activity">
    <reaction evidence="1">
        <text>DNA(n) + a 2'-deoxyribonucleoside 5'-triphosphate = DNA(n+1) + diphosphate</text>
        <dbReference type="Rhea" id="RHEA:22508"/>
        <dbReference type="Rhea" id="RHEA-COMP:17339"/>
        <dbReference type="Rhea" id="RHEA-COMP:17340"/>
        <dbReference type="ChEBI" id="CHEBI:33019"/>
        <dbReference type="ChEBI" id="CHEBI:61560"/>
        <dbReference type="ChEBI" id="CHEBI:173112"/>
        <dbReference type="EC" id="2.7.7.7"/>
    </reaction>
</comment>
<comment type="catalytic activity">
    <reaction evidence="1">
        <text>DNA(n) + a 2'-deoxyribonucleoside 5'-triphosphate = DNA(n+1) + diphosphate</text>
        <dbReference type="Rhea" id="RHEA:22508"/>
        <dbReference type="Rhea" id="RHEA-COMP:17339"/>
        <dbReference type="Rhea" id="RHEA-COMP:17340"/>
        <dbReference type="ChEBI" id="CHEBI:33019"/>
        <dbReference type="ChEBI" id="CHEBI:61560"/>
        <dbReference type="ChEBI" id="CHEBI:173112"/>
        <dbReference type="EC" id="2.7.7.49"/>
    </reaction>
</comment>
<comment type="catalytic activity">
    <reaction evidence="1">
        <text>Endonucleolytic cleavage to 5'-phosphomonoester.</text>
        <dbReference type="EC" id="3.1.26.4"/>
    </reaction>
</comment>
<comment type="activity regulation">
    <text evidence="1">Activated by host HSP70 and HSP40 in vitro to be able to bind the epsilon loop of the pgRNA. Because deletion of the RNase H region renders the protein partly chaperone-independent, the chaperones may be needed indirectly to relieve occlusion of the RNA-binding site by this domain. Inhibited by several reverse-transcriptase inhibitors: Lamivudine, Adefovir and Entecavir.</text>
</comment>
<comment type="domain">
    <text evidence="1">Terminal protein domain (TP) is hepadnavirus-specific. Spacer domain is highly variable and separates the TP and RT domains. Polymerase/reverse-transcriptase domain (RT) and ribonuclease H domain (RH) are similar to retrovirus reverse transcriptase/RNase H.</text>
</comment>
<comment type="domain">
    <text evidence="1">The polymerase/reverse transcriptase (RT) and ribonuclease H (RH) domains are structured in five subdomains: finger, palm, thumb, connection and RNase H. Within the palm subdomain, the 'primer grip' region is thought to be involved in the positioning of the primer terminus for accommodating the incoming nucleotide. The RH domain stabilizes the association of RT with primer-template.</text>
</comment>
<comment type="miscellaneous">
    <text evidence="1">Hepadnaviral virions contain probably just one P protein molecule per particle.</text>
</comment>
<comment type="similarity">
    <text evidence="1">Belongs to the hepadnaviridae P protein family.</text>
</comment>
<sequence length="843" mass="94476">MPLSYQHFRRLLLLDNEAGPLEEELPRLADEDLNHRVAEDLNLQLPNVSIPWTHKVGNFTGLYSSTIPVFNPDWLTPSFPDIHLHQDLIQKCEQFVGPLTTNERRRLKLIMPARFYPKVTKYFPLDKGIKPYYPENVVNHYFKTRHYLHTLWKAGILYKRESTHSASFCGSPYSWEQELQHGSTSLNGEKGHGTEPFCAQSSGILSRPPVGSTIQSKFQQSRLGLQHKQGQLANGKQGRSGRLRSRVHTPTRWPSGVEPSGTGHSDNLATRSTSCFHQSEVRKKANPSLSTSKGHTSTGHAVELNTVPPSTVGSESKGSVFSCWWLQFRNTEPCSDYCLSHIINLLEDWGPCYEHGEHHIRTPKTPSRVTGGVFLVDKNPHNTTESRLVVDFSQFSRGTTRVSWPKFAVPNLQSLTNLLSSNLSWLSLDVSAAFYHLPLHPAAMPHLLVGSSGLSRYVARVSSTSRIYNHQHGTLQNLHHSCSRNLYVSLLLLYQTFGRKLHLYSHPIILGFRKIPMGVGLSPFLLAQFTSAICSVVRRAFPHCLAFSYMDDLVLGAKSVQHLESLYTAVTNFLLSVGIHLNTAKTKWWGYSLHFMGYIIGSWGTLPQEHIVHKIKDCFRKLPVNRPIDWKVCQRIVGLLGFAAPFTQCGYPALMPLYACITAKQAFVFSPTYKAFLCKQYMNLYPVARQRPGLCQVFADATPTGWGLAIGHQRMRGTFVAPLPIHTAELLAACFARSRSGADIIGTDNSVVLSRKYTSFPWLLGCAANWILRGTSFVYVPSALNPADDPSRGRLGLCRPLLRLPFRPTTGRTSLYADSPPVPSHLPARVHFASPLHVAWRPP</sequence>